<evidence type="ECO:0000255" key="1">
    <source>
        <dbReference type="HAMAP-Rule" id="MF_00130"/>
    </source>
</evidence>
<organism>
    <name type="scientific">Streptococcus pyogenes serotype M3 (strain SSI-1)</name>
    <dbReference type="NCBI Taxonomy" id="193567"/>
    <lineage>
        <taxon>Bacteria</taxon>
        <taxon>Bacillati</taxon>
        <taxon>Bacillota</taxon>
        <taxon>Bacilli</taxon>
        <taxon>Lactobacillales</taxon>
        <taxon>Streptococcaceae</taxon>
        <taxon>Streptococcus</taxon>
    </lineage>
</organism>
<sequence length="202" mass="23357">MVNYPHNLIRQKVSSVQKQTKQNKVDFANRGMSFEAAINATNDYYLSRQIAVIHKKPTPVQIVKVDYPKRSRAKIVEAYFRQASTTDYCGVYKGHYVDFEAKETRQKTAMPMKNFHLHQIEHMACVLHQKGICFVLLHFSTLKETYYLPAQALISFYQIDNGSKSMPIDYIRKNGFKVAFGAFPQVPYLNIIEQNFLGGDYN</sequence>
<accession>P0DD91</accession>
<accession>P65997</accession>
<accession>Q8NZZ0</accession>
<reference key="1">
    <citation type="journal article" date="2003" name="Genome Res.">
        <title>Genome sequence of an M3 strain of Streptococcus pyogenes reveals a large-scale genomic rearrangement in invasive strains and new insights into phage evolution.</title>
        <authorList>
            <person name="Nakagawa I."/>
            <person name="Kurokawa K."/>
            <person name="Yamashita A."/>
            <person name="Nakata M."/>
            <person name="Tomiyasu Y."/>
            <person name="Okahashi N."/>
            <person name="Kawabata S."/>
            <person name="Yamazaki K."/>
            <person name="Shiba T."/>
            <person name="Yasunaga T."/>
            <person name="Hayashi H."/>
            <person name="Hattori M."/>
            <person name="Hamada S."/>
        </authorList>
    </citation>
    <scope>NUCLEOTIDE SEQUENCE [LARGE SCALE GENOMIC DNA]</scope>
    <source>
        <strain>SSI-1</strain>
    </source>
</reference>
<name>RECU_STRPQ</name>
<feature type="chain" id="PRO_0000411485" description="Holliday junction resolvase RecU">
    <location>
        <begin position="1"/>
        <end position="202"/>
    </location>
</feature>
<feature type="binding site" evidence="1">
    <location>
        <position position="85"/>
    </location>
    <ligand>
        <name>Mg(2+)</name>
        <dbReference type="ChEBI" id="CHEBI:18420"/>
    </ligand>
</feature>
<feature type="binding site" evidence="1">
    <location>
        <position position="87"/>
    </location>
    <ligand>
        <name>Mg(2+)</name>
        <dbReference type="ChEBI" id="CHEBI:18420"/>
    </ligand>
</feature>
<feature type="binding site" evidence="1">
    <location>
        <position position="100"/>
    </location>
    <ligand>
        <name>Mg(2+)</name>
        <dbReference type="ChEBI" id="CHEBI:18420"/>
    </ligand>
</feature>
<feature type="binding site" evidence="1">
    <location>
        <position position="119"/>
    </location>
    <ligand>
        <name>Mg(2+)</name>
        <dbReference type="ChEBI" id="CHEBI:18420"/>
    </ligand>
</feature>
<feature type="site" description="Transition state stabilizer" evidence="1">
    <location>
        <position position="102"/>
    </location>
</feature>
<comment type="function">
    <text evidence="1">Endonuclease that resolves Holliday junction intermediates in genetic recombination. Cleaves mobile four-strand junctions by introducing symmetrical nicks in paired strands. Promotes annealing of linear ssDNA with homologous dsDNA. Required for DNA repair, homologous recombination and chromosome segregation.</text>
</comment>
<comment type="catalytic activity">
    <reaction evidence="1">
        <text>Endonucleolytic cleavage at a junction such as a reciprocal single-stranded crossover between two homologous DNA duplexes (Holliday junction).</text>
        <dbReference type="EC" id="3.1.21.10"/>
    </reaction>
</comment>
<comment type="cofactor">
    <cofactor evidence="1">
        <name>Mg(2+)</name>
        <dbReference type="ChEBI" id="CHEBI:18420"/>
    </cofactor>
    <text evidence="1">Binds 1 Mg(2+) ion per subunit.</text>
</comment>
<comment type="subcellular location">
    <subcellularLocation>
        <location evidence="1">Cytoplasm</location>
    </subcellularLocation>
</comment>
<comment type="similarity">
    <text evidence="1">Belongs to the RecU family.</text>
</comment>
<protein>
    <recommendedName>
        <fullName evidence="1">Holliday junction resolvase RecU</fullName>
        <ecNumber evidence="1">3.1.21.10</ecNumber>
    </recommendedName>
    <alternativeName>
        <fullName evidence="1">Recombination protein U homolog</fullName>
    </alternativeName>
</protein>
<dbReference type="EC" id="3.1.21.10" evidence="1"/>
<dbReference type="EMBL" id="BA000034">
    <property type="protein sequence ID" value="BAC63568.1"/>
    <property type="molecule type" value="Genomic_DNA"/>
</dbReference>
<dbReference type="RefSeq" id="WP_002983622.1">
    <property type="nucleotide sequence ID" value="NC_004606.1"/>
</dbReference>
<dbReference type="SMR" id="P0DD91"/>
<dbReference type="GeneID" id="69900483"/>
<dbReference type="KEGG" id="sps:SPs0473"/>
<dbReference type="HOGENOM" id="CLU_096340_0_0_9"/>
<dbReference type="GO" id="GO:0005737">
    <property type="term" value="C:cytoplasm"/>
    <property type="evidence" value="ECO:0007669"/>
    <property type="project" value="UniProtKB-SubCell"/>
</dbReference>
<dbReference type="GO" id="GO:0004519">
    <property type="term" value="F:endonuclease activity"/>
    <property type="evidence" value="ECO:0007669"/>
    <property type="project" value="UniProtKB-UniRule"/>
</dbReference>
<dbReference type="GO" id="GO:0000287">
    <property type="term" value="F:magnesium ion binding"/>
    <property type="evidence" value="ECO:0007669"/>
    <property type="project" value="UniProtKB-UniRule"/>
</dbReference>
<dbReference type="GO" id="GO:0003676">
    <property type="term" value="F:nucleic acid binding"/>
    <property type="evidence" value="ECO:0007669"/>
    <property type="project" value="InterPro"/>
</dbReference>
<dbReference type="GO" id="GO:0007059">
    <property type="term" value="P:chromosome segregation"/>
    <property type="evidence" value="ECO:0007669"/>
    <property type="project" value="UniProtKB-UniRule"/>
</dbReference>
<dbReference type="GO" id="GO:0006310">
    <property type="term" value="P:DNA recombination"/>
    <property type="evidence" value="ECO:0007669"/>
    <property type="project" value="UniProtKB-UniRule"/>
</dbReference>
<dbReference type="GO" id="GO:0006281">
    <property type="term" value="P:DNA repair"/>
    <property type="evidence" value="ECO:0007669"/>
    <property type="project" value="UniProtKB-UniRule"/>
</dbReference>
<dbReference type="CDD" id="cd22354">
    <property type="entry name" value="RecU-like"/>
    <property type="match status" value="1"/>
</dbReference>
<dbReference type="Gene3D" id="3.40.1350.10">
    <property type="match status" value="1"/>
</dbReference>
<dbReference type="HAMAP" id="MF_00130">
    <property type="entry name" value="RecU"/>
    <property type="match status" value="1"/>
</dbReference>
<dbReference type="InterPro" id="IPR004612">
    <property type="entry name" value="Resolv_RecU"/>
</dbReference>
<dbReference type="InterPro" id="IPR011335">
    <property type="entry name" value="Restrct_endonuc-II-like"/>
</dbReference>
<dbReference type="InterPro" id="IPR011856">
    <property type="entry name" value="tRNA_endonuc-like_dom_sf"/>
</dbReference>
<dbReference type="NCBIfam" id="NF002580">
    <property type="entry name" value="PRK02234.1-1"/>
    <property type="match status" value="1"/>
</dbReference>
<dbReference type="NCBIfam" id="NF002584">
    <property type="entry name" value="PRK02234.1-5"/>
    <property type="match status" value="1"/>
</dbReference>
<dbReference type="NCBIfam" id="TIGR00648">
    <property type="entry name" value="recU"/>
    <property type="match status" value="1"/>
</dbReference>
<dbReference type="Pfam" id="PF03838">
    <property type="entry name" value="RecU"/>
    <property type="match status" value="1"/>
</dbReference>
<dbReference type="PIRSF" id="PIRSF037785">
    <property type="entry name" value="RecU"/>
    <property type="match status" value="1"/>
</dbReference>
<dbReference type="SUPFAM" id="SSF52980">
    <property type="entry name" value="Restriction endonuclease-like"/>
    <property type="match status" value="1"/>
</dbReference>
<gene>
    <name evidence="1" type="primary">recU</name>
    <name type="ordered locus">SPs0473</name>
</gene>
<proteinExistence type="inferred from homology"/>
<keyword id="KW-0963">Cytoplasm</keyword>
<keyword id="KW-0227">DNA damage</keyword>
<keyword id="KW-0233">DNA recombination</keyword>
<keyword id="KW-0234">DNA repair</keyword>
<keyword id="KW-0255">Endonuclease</keyword>
<keyword id="KW-0378">Hydrolase</keyword>
<keyword id="KW-0460">Magnesium</keyword>
<keyword id="KW-0479">Metal-binding</keyword>
<keyword id="KW-0540">Nuclease</keyword>